<comment type="function">
    <text evidence="1">DNA-dependent RNA polymerase catalyzes the transcription of DNA into RNA using the four ribonucleoside triphosphates as substrates.</text>
</comment>
<comment type="catalytic activity">
    <reaction evidence="1">
        <text>RNA(n) + a ribonucleoside 5'-triphosphate = RNA(n+1) + diphosphate</text>
        <dbReference type="Rhea" id="RHEA:21248"/>
        <dbReference type="Rhea" id="RHEA-COMP:14527"/>
        <dbReference type="Rhea" id="RHEA-COMP:17342"/>
        <dbReference type="ChEBI" id="CHEBI:33019"/>
        <dbReference type="ChEBI" id="CHEBI:61557"/>
        <dbReference type="ChEBI" id="CHEBI:140395"/>
        <dbReference type="EC" id="2.7.7.6"/>
    </reaction>
</comment>
<comment type="cofactor">
    <cofactor evidence="1">
        <name>Zn(2+)</name>
        <dbReference type="ChEBI" id="CHEBI:29105"/>
    </cofactor>
    <text evidence="1">Binds 1 Zn(2+) ion per subunit.</text>
</comment>
<comment type="subunit">
    <text evidence="1">In plastids the minimal PEP RNA polymerase catalytic core is composed of four subunits: alpha, beta, beta', and beta''. When a (nuclear-encoded) sigma factor is associated with the core the holoenzyme is formed, which can initiate transcription.</text>
</comment>
<comment type="subcellular location">
    <subcellularLocation>
        <location evidence="1">Plastid</location>
        <location evidence="1">Chloroplast</location>
    </subcellularLocation>
</comment>
<comment type="similarity">
    <text evidence="1">Belongs to the RNA polymerase beta' chain family. RpoC2 subfamily.</text>
</comment>
<evidence type="ECO:0000255" key="1">
    <source>
        <dbReference type="HAMAP-Rule" id="MF_01324"/>
    </source>
</evidence>
<geneLocation type="chloroplast"/>
<keyword id="KW-0150">Chloroplast</keyword>
<keyword id="KW-0240">DNA-directed RNA polymerase</keyword>
<keyword id="KW-0479">Metal-binding</keyword>
<keyword id="KW-0548">Nucleotidyltransferase</keyword>
<keyword id="KW-0934">Plastid</keyword>
<keyword id="KW-0804">Transcription</keyword>
<keyword id="KW-0808">Transferase</keyword>
<keyword id="KW-0862">Zinc</keyword>
<reference key="1">
    <citation type="submission" date="2007-03" db="EMBL/GenBank/DDBJ databases">
        <title>Sequencing analysis of Capsella bursa-pastoris JO22 chloroplast DNA.</title>
        <authorList>
            <person name="Hosouchi T."/>
            <person name="Tsuruoka H."/>
            <person name="Kotani H."/>
        </authorList>
    </citation>
    <scope>NUCLEOTIDE SEQUENCE [LARGE SCALE GENOMIC DNA]</scope>
</reference>
<protein>
    <recommendedName>
        <fullName evidence="1">DNA-directed RNA polymerase subunit beta''</fullName>
        <ecNumber evidence="1">2.7.7.6</ecNumber>
    </recommendedName>
    <alternativeName>
        <fullName evidence="1">PEP</fullName>
    </alternativeName>
    <alternativeName>
        <fullName evidence="1">Plastid-encoded RNA polymerase subunit beta''</fullName>
        <shortName evidence="1">RNA polymerase subunit beta''</shortName>
    </alternativeName>
</protein>
<name>RPOC2_CAPBU</name>
<gene>
    <name evidence="1" type="primary">rpoC2</name>
</gene>
<organism>
    <name type="scientific">Capsella bursa-pastoris</name>
    <name type="common">Shepherd's purse</name>
    <name type="synonym">Thlaspi bursa-pastoris</name>
    <dbReference type="NCBI Taxonomy" id="3719"/>
    <lineage>
        <taxon>Eukaryota</taxon>
        <taxon>Viridiplantae</taxon>
        <taxon>Streptophyta</taxon>
        <taxon>Embryophyta</taxon>
        <taxon>Tracheophyta</taxon>
        <taxon>Spermatophyta</taxon>
        <taxon>Magnoliopsida</taxon>
        <taxon>eudicotyledons</taxon>
        <taxon>Gunneridae</taxon>
        <taxon>Pentapetalae</taxon>
        <taxon>rosids</taxon>
        <taxon>malvids</taxon>
        <taxon>Brassicales</taxon>
        <taxon>Brassicaceae</taxon>
        <taxon>Camelineae</taxon>
        <taxon>Capsella</taxon>
    </lineage>
</organism>
<feature type="chain" id="PRO_0000353549" description="DNA-directed RNA polymerase subunit beta''">
    <location>
        <begin position="1"/>
        <end position="1379"/>
    </location>
</feature>
<feature type="binding site" evidence="1">
    <location>
        <position position="220"/>
    </location>
    <ligand>
        <name>Zn(2+)</name>
        <dbReference type="ChEBI" id="CHEBI:29105"/>
    </ligand>
</feature>
<feature type="binding site" evidence="1">
    <location>
        <position position="293"/>
    </location>
    <ligand>
        <name>Zn(2+)</name>
        <dbReference type="ChEBI" id="CHEBI:29105"/>
    </ligand>
</feature>
<feature type="binding site" evidence="1">
    <location>
        <position position="300"/>
    </location>
    <ligand>
        <name>Zn(2+)</name>
        <dbReference type="ChEBI" id="CHEBI:29105"/>
    </ligand>
</feature>
<feature type="binding site" evidence="1">
    <location>
        <position position="303"/>
    </location>
    <ligand>
        <name>Zn(2+)</name>
        <dbReference type="ChEBI" id="CHEBI:29105"/>
    </ligand>
</feature>
<accession>A4QKI2</accession>
<sequence length="1379" mass="156925">MAERANLVFHNKVIDGTAIKRLISRLIDHFGMAYTSHILDQVKTLGFQQATATSISLGIDDLLTIPSKGWLVQDAEQQSWILEKHHHYGNVHAVEKLRQSIEIWYATSEYLRQEMNPNFRMTDPFNPVHMMSFSGARGNASQVHQLVGMRGLMSDPQGQMIDLPIQSNLREGLSLTEYIISCYGARKGVVDTAVRTSDAGYLTRRLVEVVQHIVVRRTDCGTIRGISVSPRNKNRMMSERIFIQTLIGRVLADDIYIGSRCVAFRNQDLGIGLVNRLITFGTQSISIRTPFTCRSTSWICRLCYGRSPTHGDLVELGEAVGIIAGQSIGEPGTQLTLRTFHTGGVFTGGTAEHVRAPYNGKIKFNEDLVHPTRTRHGHPAFLCYIDLSVIIESEDIIHSVTIPPKSFLLVQNDQYVESEQVIAEIREGTYTFHFKERVRKYIYSDSEGEMHWSTDVSHAPEFTYSNVHLLPKTSHLWILSGGSCGSSLILFSIHKDQDQMNIPFLSAERKSISSLSVNNDQTSQKFFSSDFADKKKLGISYYSELNGNLGTSHYNFIYSAIFQENSDLLAKRRRNRFLIPFQSIQEQEKEFIPHSGISVEIPINGIFRRNSIFAFFDDPRYRRKSSGILKYGALKADSIIQKEDMIEYRGVQKFKTKYEMKVDRFFFIPEEVHILPESSAIMVQNYSIIGVDTRLTLNIRSQVGGLIRVERKKKRVELKIFSGDIHFPDKTDKISRHSGILIPPGRGKTNSKESKKFKNWIYVQRITPTKKKFFVLVRPVATYEIADSINLATLFPQDLFREKDNIQLRVFNYILYGNGKPTRGIADTSIQLVRTCLVLNWDQDNKNSALEAVRAFFVEVSTKGLIRDFIRIGLVKSHISYIRKRKNSPDSGFISADHMNPFYPISPKAGILQQSLRQNRGTIRMFLNRNKESQSLLILSSSNCFRMGPFNHVKYHNVINQSIKKNTLITIKNSSGPLGTATQISNFYSFLPLLTYNQISLIKYLQLDNFKYIFQVINSYLIDENGRIFNLDPYSNVVLNPFKLNWYFLHQNYHHNYCEETSTIISLGQFFCENVCIAKKEPHLKSGQVLIVQRDSVVIRSAKPYLATPGAKVHGHYREILYEGDTLVTFIYEKSRSGDITQGLPKVEQVLEVRSIDSISLNLEKRIKGWNKCITRILGIPWGFLIGAELTIVQSRISLVNKIQKVYRSQGVQIHNRHIEIIVRQITSKVLVSEEGMSNVFLPGELIGLLRAERTGRALEEAICYRAVLLGITRASLNTQSFISEASFQETARVLAKAALRGRIDWLKGLKENVVLGGVIPAGTGFNKGLVHCSRQHTNILLEKKTKNLALFEGDMRDILFYHREFCESSISKSDFSRI</sequence>
<dbReference type="EC" id="2.7.7.6" evidence="1"/>
<dbReference type="EMBL" id="AP009371">
    <property type="protein sequence ID" value="BAF50187.1"/>
    <property type="molecule type" value="Genomic_DNA"/>
</dbReference>
<dbReference type="RefSeq" id="YP_001123363.1">
    <property type="nucleotide sequence ID" value="NC_009270.1"/>
</dbReference>
<dbReference type="SMR" id="A4QKI2"/>
<dbReference type="GeneID" id="4961728"/>
<dbReference type="GO" id="GO:0009507">
    <property type="term" value="C:chloroplast"/>
    <property type="evidence" value="ECO:0007669"/>
    <property type="project" value="UniProtKB-SubCell"/>
</dbReference>
<dbReference type="GO" id="GO:0000428">
    <property type="term" value="C:DNA-directed RNA polymerase complex"/>
    <property type="evidence" value="ECO:0007669"/>
    <property type="project" value="UniProtKB-KW"/>
</dbReference>
<dbReference type="GO" id="GO:0005739">
    <property type="term" value="C:mitochondrion"/>
    <property type="evidence" value="ECO:0007669"/>
    <property type="project" value="GOC"/>
</dbReference>
<dbReference type="GO" id="GO:0003677">
    <property type="term" value="F:DNA binding"/>
    <property type="evidence" value="ECO:0007669"/>
    <property type="project" value="UniProtKB-UniRule"/>
</dbReference>
<dbReference type="GO" id="GO:0003899">
    <property type="term" value="F:DNA-directed RNA polymerase activity"/>
    <property type="evidence" value="ECO:0007669"/>
    <property type="project" value="UniProtKB-UniRule"/>
</dbReference>
<dbReference type="GO" id="GO:0008270">
    <property type="term" value="F:zinc ion binding"/>
    <property type="evidence" value="ECO:0007669"/>
    <property type="project" value="UniProtKB-UniRule"/>
</dbReference>
<dbReference type="GO" id="GO:0006351">
    <property type="term" value="P:DNA-templated transcription"/>
    <property type="evidence" value="ECO:0007669"/>
    <property type="project" value="UniProtKB-UniRule"/>
</dbReference>
<dbReference type="CDD" id="cd02655">
    <property type="entry name" value="RNAP_beta'_C"/>
    <property type="match status" value="1"/>
</dbReference>
<dbReference type="FunFam" id="1.10.132.30:FF:000002">
    <property type="entry name" value="DNA-directed RNA polymerase subunit beta"/>
    <property type="match status" value="1"/>
</dbReference>
<dbReference type="FunFam" id="1.10.1790.20:FF:000002">
    <property type="entry name" value="DNA-directed RNA polymerase subunit beta"/>
    <property type="match status" value="1"/>
</dbReference>
<dbReference type="FunFam" id="1.10.274.100:FF:000011">
    <property type="entry name" value="DNA-directed RNA polymerase subunit beta"/>
    <property type="match status" value="1"/>
</dbReference>
<dbReference type="Gene3D" id="1.10.132.30">
    <property type="match status" value="1"/>
</dbReference>
<dbReference type="Gene3D" id="1.10.150.390">
    <property type="match status" value="1"/>
</dbReference>
<dbReference type="Gene3D" id="1.10.1790.20">
    <property type="match status" value="1"/>
</dbReference>
<dbReference type="Gene3D" id="1.10.274.100">
    <property type="entry name" value="RNA polymerase Rpb1, domain 3"/>
    <property type="match status" value="1"/>
</dbReference>
<dbReference type="HAMAP" id="MF_01324">
    <property type="entry name" value="RNApol_bact_RpoC2"/>
    <property type="match status" value="1"/>
</dbReference>
<dbReference type="InterPro" id="IPR012756">
    <property type="entry name" value="DNA-dir_RpoC2_beta_pp"/>
</dbReference>
<dbReference type="InterPro" id="IPR050254">
    <property type="entry name" value="RNA_pol_beta''_euk"/>
</dbReference>
<dbReference type="InterPro" id="IPR042102">
    <property type="entry name" value="RNA_pol_Rpb1_3_sf"/>
</dbReference>
<dbReference type="InterPro" id="IPR007083">
    <property type="entry name" value="RNA_pol_Rpb1_4"/>
</dbReference>
<dbReference type="InterPro" id="IPR007081">
    <property type="entry name" value="RNA_pol_Rpb1_5"/>
</dbReference>
<dbReference type="InterPro" id="IPR038120">
    <property type="entry name" value="Rpb1_funnel_sf"/>
</dbReference>
<dbReference type="NCBIfam" id="TIGR02388">
    <property type="entry name" value="rpoC2_cyan"/>
    <property type="match status" value="1"/>
</dbReference>
<dbReference type="PANTHER" id="PTHR34995">
    <property type="entry name" value="DNA-DIRECTED RNA POLYMERASE SUBUNIT BETA"/>
    <property type="match status" value="1"/>
</dbReference>
<dbReference type="PANTHER" id="PTHR34995:SF1">
    <property type="entry name" value="DNA-DIRECTED RNA POLYMERASE SUBUNIT BETA"/>
    <property type="match status" value="1"/>
</dbReference>
<dbReference type="Pfam" id="PF05000">
    <property type="entry name" value="RNA_pol_Rpb1_4"/>
    <property type="match status" value="1"/>
</dbReference>
<dbReference type="Pfam" id="PF04998">
    <property type="entry name" value="RNA_pol_Rpb1_5"/>
    <property type="match status" value="2"/>
</dbReference>
<dbReference type="SUPFAM" id="SSF64484">
    <property type="entry name" value="beta and beta-prime subunits of DNA dependent RNA-polymerase"/>
    <property type="match status" value="1"/>
</dbReference>
<proteinExistence type="inferred from homology"/>